<accession>Q36425</accession>
<protein>
    <recommendedName>
        <fullName>NADH-ubiquinone oxidoreductase chain 6</fullName>
        <ecNumber>7.1.1.2</ecNumber>
    </recommendedName>
    <alternativeName>
        <fullName>NADH dehydrogenase subunit 6</fullName>
    </alternativeName>
</protein>
<keyword id="KW-0249">Electron transport</keyword>
<keyword id="KW-0472">Membrane</keyword>
<keyword id="KW-0496">Mitochondrion</keyword>
<keyword id="KW-0520">NAD</keyword>
<keyword id="KW-0679">Respiratory chain</keyword>
<keyword id="KW-1278">Translocase</keyword>
<keyword id="KW-0812">Transmembrane</keyword>
<keyword id="KW-1133">Transmembrane helix</keyword>
<keyword id="KW-0813">Transport</keyword>
<keyword id="KW-0830">Ubiquinone</keyword>
<dbReference type="EC" id="7.1.1.2"/>
<dbReference type="EMBL" id="X80245">
    <property type="protein sequence ID" value="CAA56535.1"/>
    <property type="molecule type" value="Genomic_DNA"/>
</dbReference>
<dbReference type="PIR" id="S40618">
    <property type="entry name" value="S40618"/>
</dbReference>
<dbReference type="RefSeq" id="NP_007300.1">
    <property type="nucleotide sequence ID" value="NC_001712.1"/>
</dbReference>
<dbReference type="SMR" id="Q36425"/>
<dbReference type="GeneID" id="807967"/>
<dbReference type="CTD" id="4541"/>
<dbReference type="GO" id="GO:0031966">
    <property type="term" value="C:mitochondrial membrane"/>
    <property type="evidence" value="ECO:0007669"/>
    <property type="project" value="UniProtKB-SubCell"/>
</dbReference>
<dbReference type="GO" id="GO:0008137">
    <property type="term" value="F:NADH dehydrogenase (ubiquinone) activity"/>
    <property type="evidence" value="ECO:0007669"/>
    <property type="project" value="UniProtKB-EC"/>
</dbReference>
<dbReference type="InterPro" id="IPR050269">
    <property type="entry name" value="ComplexI_Subunit6"/>
</dbReference>
<dbReference type="PANTHER" id="PTHR11435">
    <property type="entry name" value="NADH UBIQUINONE OXIDOREDUCTASE SUBUNIT ND6"/>
    <property type="match status" value="1"/>
</dbReference>
<dbReference type="PANTHER" id="PTHR11435:SF1">
    <property type="entry name" value="NADH-UBIQUINONE OXIDOREDUCTASE CHAIN 6"/>
    <property type="match status" value="1"/>
</dbReference>
<sequence>MMKMMIMSSSNLMNINFMKMNHPMSIMMTIIIQTLFISMMTGTMMESFWLSYILLLTFLGGMMVLFIYITSIASNEMFKIKINSIIIIVYMMIILSTLMYKLDKTISTEMIKNSEIMNLNYSINFKEMSTSLVKLYNNPTVIITIMMMIYLFITLLAVVKITNINQGPMRKMS</sequence>
<geneLocation type="mitochondrion"/>
<evidence type="ECO:0000250" key="1"/>
<evidence type="ECO:0000255" key="2"/>
<evidence type="ECO:0000305" key="3"/>
<gene>
    <name type="primary">ND6</name>
</gene>
<feature type="chain" id="PRO_0000118296" description="NADH-ubiquinone oxidoreductase chain 6">
    <location>
        <begin position="1"/>
        <end position="173"/>
    </location>
</feature>
<feature type="transmembrane region" description="Helical" evidence="2">
    <location>
        <begin position="24"/>
        <end position="44"/>
    </location>
</feature>
<feature type="transmembrane region" description="Helical" evidence="2">
    <location>
        <begin position="49"/>
        <end position="69"/>
    </location>
</feature>
<feature type="transmembrane region" description="Helical" evidence="2">
    <location>
        <begin position="80"/>
        <end position="100"/>
    </location>
</feature>
<feature type="transmembrane region" description="Helical" evidence="2">
    <location>
        <begin position="139"/>
        <end position="159"/>
    </location>
</feature>
<reference key="1">
    <citation type="journal article" date="1994" name="Curr. Genet.">
        <title>The genes for cytochrome b, ND 4L, ND6 and two tRNAs from the mitochondrial genome of the locust, Locusta migratoria.</title>
        <authorList>
            <person name="Rippe R.M."/>
            <person name="Gellissen G."/>
        </authorList>
    </citation>
    <scope>NUCLEOTIDE SEQUENCE [GENOMIC DNA]</scope>
</reference>
<reference key="2">
    <citation type="journal article" date="1995" name="J. Mol. Evol.">
        <title>The sequence, organization, and evolution of the Locusta migratoria mitochondrial genome.</title>
        <authorList>
            <person name="Flook P.K."/>
            <person name="Rowell C.H.F."/>
            <person name="Gellissen G."/>
        </authorList>
    </citation>
    <scope>NUCLEOTIDE SEQUENCE [GENOMIC DNA]</scope>
</reference>
<comment type="function">
    <text evidence="1">Core subunit of the mitochondrial membrane respiratory chain NADH dehydrogenase (Complex I) that is believed to belong to the minimal assembly required for catalysis. Complex I functions in the transfer of electrons from NADH to the respiratory chain. The immediate electron acceptor for the enzyme is believed to be ubiquinone (By similarity).</text>
</comment>
<comment type="catalytic activity">
    <reaction>
        <text>a ubiquinone + NADH + 5 H(+)(in) = a ubiquinol + NAD(+) + 4 H(+)(out)</text>
        <dbReference type="Rhea" id="RHEA:29091"/>
        <dbReference type="Rhea" id="RHEA-COMP:9565"/>
        <dbReference type="Rhea" id="RHEA-COMP:9566"/>
        <dbReference type="ChEBI" id="CHEBI:15378"/>
        <dbReference type="ChEBI" id="CHEBI:16389"/>
        <dbReference type="ChEBI" id="CHEBI:17976"/>
        <dbReference type="ChEBI" id="CHEBI:57540"/>
        <dbReference type="ChEBI" id="CHEBI:57945"/>
        <dbReference type="EC" id="7.1.1.2"/>
    </reaction>
</comment>
<comment type="subcellular location">
    <subcellularLocation>
        <location evidence="3">Mitochondrion membrane</location>
        <topology evidence="3">Multi-pass membrane protein</topology>
    </subcellularLocation>
</comment>
<comment type="similarity">
    <text evidence="3">Belongs to the complex I subunit 6 family.</text>
</comment>
<organism>
    <name type="scientific">Locusta migratoria</name>
    <name type="common">Migratory locust</name>
    <dbReference type="NCBI Taxonomy" id="7004"/>
    <lineage>
        <taxon>Eukaryota</taxon>
        <taxon>Metazoa</taxon>
        <taxon>Ecdysozoa</taxon>
        <taxon>Arthropoda</taxon>
        <taxon>Hexapoda</taxon>
        <taxon>Insecta</taxon>
        <taxon>Pterygota</taxon>
        <taxon>Neoptera</taxon>
        <taxon>Polyneoptera</taxon>
        <taxon>Orthoptera</taxon>
        <taxon>Caelifera</taxon>
        <taxon>Acrididea</taxon>
        <taxon>Acridomorpha</taxon>
        <taxon>Acridoidea</taxon>
        <taxon>Acrididae</taxon>
        <taxon>Oedipodinae</taxon>
        <taxon>Locusta</taxon>
    </lineage>
</organism>
<name>NU6M_LOCMI</name>
<proteinExistence type="inferred from homology"/>